<comment type="function">
    <text evidence="1">Responsible for the low-affinity transport of potassium into the cell. Likely operates as a K(+):H(+) symporter.</text>
</comment>
<comment type="catalytic activity">
    <reaction evidence="1">
        <text>K(+)(in) + H(+)(in) = K(+)(out) + H(+)(out)</text>
        <dbReference type="Rhea" id="RHEA:28490"/>
        <dbReference type="ChEBI" id="CHEBI:15378"/>
        <dbReference type="ChEBI" id="CHEBI:29103"/>
    </reaction>
    <physiologicalReaction direction="right-to-left" evidence="1">
        <dbReference type="Rhea" id="RHEA:28492"/>
    </physiologicalReaction>
</comment>
<comment type="subcellular location">
    <subcellularLocation>
        <location evidence="1">Cell inner membrane</location>
        <topology evidence="1">Multi-pass membrane protein</topology>
    </subcellularLocation>
</comment>
<comment type="similarity">
    <text evidence="1">Belongs to the HAK/KUP transporter (TC 2.A.72) family.</text>
</comment>
<name>KUP_ENT38</name>
<organism>
    <name type="scientific">Enterobacter sp. (strain 638)</name>
    <dbReference type="NCBI Taxonomy" id="399742"/>
    <lineage>
        <taxon>Bacteria</taxon>
        <taxon>Pseudomonadati</taxon>
        <taxon>Pseudomonadota</taxon>
        <taxon>Gammaproteobacteria</taxon>
        <taxon>Enterobacterales</taxon>
        <taxon>Enterobacteriaceae</taxon>
        <taxon>Enterobacter</taxon>
    </lineage>
</organism>
<keyword id="KW-0997">Cell inner membrane</keyword>
<keyword id="KW-1003">Cell membrane</keyword>
<keyword id="KW-0406">Ion transport</keyword>
<keyword id="KW-0472">Membrane</keyword>
<keyword id="KW-0630">Potassium</keyword>
<keyword id="KW-0633">Potassium transport</keyword>
<keyword id="KW-0769">Symport</keyword>
<keyword id="KW-0812">Transmembrane</keyword>
<keyword id="KW-1133">Transmembrane helix</keyword>
<keyword id="KW-0813">Transport</keyword>
<sequence length="622" mass="69068">MSTDNKQSLRAITLAAIGVVYGDIGTSPLYTLRECLSGQFGFGVERDAVFGFLSLIFWLLILVVSLKYLSFVMRADNAGEGGILTLMSLAGRNTSARMTSFLVIIGLIGGSFFYGEVVITPAISVLSAIEGLEIIAPQLDTWVVPLAIIVLTLLFAIQKHGTGLVGKLFAPIMLAWFLILAALGLRGIMGNPEVLQALNPIWAVHFFLEYKTVSFVALGAVVLSITGVEALYADMGHFGKLPIRLAWFTVVLPSLVLNYFGQGALLLKNPEAIKNPFFLLAPDWALVPMLIIATLATVIASQAVISGVFSLTRQAVRLGYLSPMRIIHTSEMESGQIYIPFINWLLYVAVVIVIVSFEHSSNLAAAYGIAVTGTMVLTSILSTTVAYRNWHWNKFLVALILVGLLCIDLPLFSANLDKIVSGGWLPLTLGLVMFIVMTTWKSERFRLLRRMHEHGNSLEAMIASLEKSPPVRVPGTAVYMSRAQKVIPFALMHNLKHNKVLHERVILLTLRTEDAPYVHNVRRVQIEQLSPTFWRVVASYGWRETPNVEEVFHRCGLEGLSCRMMETSFFMSHESLIVGKRPWYLRLRGKLYLILQRNALRAPDQFEIPPNRVIELGTQVEI</sequence>
<proteinExistence type="inferred from homology"/>
<dbReference type="EMBL" id="CP000653">
    <property type="protein sequence ID" value="ABP62770.1"/>
    <property type="molecule type" value="Genomic_DNA"/>
</dbReference>
<dbReference type="RefSeq" id="WP_015961074.1">
    <property type="nucleotide sequence ID" value="NC_009436.1"/>
</dbReference>
<dbReference type="STRING" id="399742.Ent638_4117"/>
<dbReference type="KEGG" id="ent:Ent638_4117"/>
<dbReference type="eggNOG" id="COG3158">
    <property type="taxonomic scope" value="Bacteria"/>
</dbReference>
<dbReference type="HOGENOM" id="CLU_008142_4_2_6"/>
<dbReference type="OrthoDB" id="9805577at2"/>
<dbReference type="Proteomes" id="UP000000230">
    <property type="component" value="Chromosome"/>
</dbReference>
<dbReference type="GO" id="GO:0005886">
    <property type="term" value="C:plasma membrane"/>
    <property type="evidence" value="ECO:0007669"/>
    <property type="project" value="UniProtKB-SubCell"/>
</dbReference>
<dbReference type="GO" id="GO:0015079">
    <property type="term" value="F:potassium ion transmembrane transporter activity"/>
    <property type="evidence" value="ECO:0007669"/>
    <property type="project" value="UniProtKB-UniRule"/>
</dbReference>
<dbReference type="GO" id="GO:0015293">
    <property type="term" value="F:symporter activity"/>
    <property type="evidence" value="ECO:0007669"/>
    <property type="project" value="UniProtKB-UniRule"/>
</dbReference>
<dbReference type="HAMAP" id="MF_01522">
    <property type="entry name" value="Kup"/>
    <property type="match status" value="1"/>
</dbReference>
<dbReference type="InterPro" id="IPR003855">
    <property type="entry name" value="K+_transporter"/>
</dbReference>
<dbReference type="InterPro" id="IPR053952">
    <property type="entry name" value="K_trans_C"/>
</dbReference>
<dbReference type="InterPro" id="IPR053951">
    <property type="entry name" value="K_trans_N"/>
</dbReference>
<dbReference type="InterPro" id="IPR023051">
    <property type="entry name" value="Kup"/>
</dbReference>
<dbReference type="NCBIfam" id="TIGR00794">
    <property type="entry name" value="kup"/>
    <property type="match status" value="1"/>
</dbReference>
<dbReference type="NCBIfam" id="NF008015">
    <property type="entry name" value="PRK10745.1"/>
    <property type="match status" value="1"/>
</dbReference>
<dbReference type="PANTHER" id="PTHR30540:SF79">
    <property type="entry name" value="LOW AFFINITY POTASSIUM TRANSPORT SYSTEM PROTEIN KUP"/>
    <property type="match status" value="1"/>
</dbReference>
<dbReference type="PANTHER" id="PTHR30540">
    <property type="entry name" value="OSMOTIC STRESS POTASSIUM TRANSPORTER"/>
    <property type="match status" value="1"/>
</dbReference>
<dbReference type="Pfam" id="PF02705">
    <property type="entry name" value="K_trans"/>
    <property type="match status" value="1"/>
</dbReference>
<dbReference type="Pfam" id="PF22776">
    <property type="entry name" value="K_trans_C"/>
    <property type="match status" value="1"/>
</dbReference>
<accession>A4WGE0</accession>
<protein>
    <recommendedName>
        <fullName evidence="1">Low affinity potassium transport system protein Kup</fullName>
    </recommendedName>
    <alternativeName>
        <fullName evidence="1">Kup system potassium uptake protein</fullName>
    </alternativeName>
</protein>
<feature type="chain" id="PRO_1000068647" description="Low affinity potassium transport system protein Kup">
    <location>
        <begin position="1"/>
        <end position="622"/>
    </location>
</feature>
<feature type="transmembrane region" description="Helical" evidence="1">
    <location>
        <begin position="12"/>
        <end position="32"/>
    </location>
</feature>
<feature type="transmembrane region" description="Helical" evidence="1">
    <location>
        <begin position="49"/>
        <end position="69"/>
    </location>
</feature>
<feature type="transmembrane region" description="Helical" evidence="1">
    <location>
        <begin position="101"/>
        <end position="121"/>
    </location>
</feature>
<feature type="transmembrane region" description="Helical" evidence="1">
    <location>
        <begin position="134"/>
        <end position="154"/>
    </location>
</feature>
<feature type="transmembrane region" description="Helical" evidence="1">
    <location>
        <begin position="163"/>
        <end position="183"/>
    </location>
</feature>
<feature type="transmembrane region" description="Helical" evidence="1">
    <location>
        <begin position="213"/>
        <end position="233"/>
    </location>
</feature>
<feature type="transmembrane region" description="Helical" evidence="1">
    <location>
        <begin position="247"/>
        <end position="267"/>
    </location>
</feature>
<feature type="transmembrane region" description="Helical" evidence="1">
    <location>
        <begin position="276"/>
        <end position="296"/>
    </location>
</feature>
<feature type="transmembrane region" description="Helical" evidence="1">
    <location>
        <begin position="337"/>
        <end position="357"/>
    </location>
</feature>
<feature type="transmembrane region" description="Helical" evidence="1">
    <location>
        <begin position="363"/>
        <end position="383"/>
    </location>
</feature>
<feature type="transmembrane region" description="Helical" evidence="1">
    <location>
        <begin position="395"/>
        <end position="415"/>
    </location>
</feature>
<feature type="transmembrane region" description="Helical" evidence="1">
    <location>
        <begin position="419"/>
        <end position="439"/>
    </location>
</feature>
<evidence type="ECO:0000255" key="1">
    <source>
        <dbReference type="HAMAP-Rule" id="MF_01522"/>
    </source>
</evidence>
<reference key="1">
    <citation type="journal article" date="2010" name="PLoS Genet.">
        <title>Genome sequence of the plant growth promoting endophytic bacterium Enterobacter sp. 638.</title>
        <authorList>
            <person name="Taghavi S."/>
            <person name="van der Lelie D."/>
            <person name="Hoffman A."/>
            <person name="Zhang Y.B."/>
            <person name="Walla M.D."/>
            <person name="Vangronsveld J."/>
            <person name="Newman L."/>
            <person name="Monchy S."/>
        </authorList>
    </citation>
    <scope>NUCLEOTIDE SEQUENCE [LARGE SCALE GENOMIC DNA]</scope>
    <source>
        <strain>638</strain>
    </source>
</reference>
<gene>
    <name evidence="1" type="primary">kup</name>
    <name type="ordered locus">Ent638_4117</name>
</gene>